<name>ENV_HV2UC</name>
<organismHost>
    <name type="scientific">Homo sapiens</name>
    <name type="common">Human</name>
    <dbReference type="NCBI Taxonomy" id="9606"/>
</organismHost>
<evidence type="ECO:0000250" key="1"/>
<evidence type="ECO:0000255" key="2"/>
<evidence type="ECO:0000305" key="3"/>
<protein>
    <recommendedName>
        <fullName>Envelope glycoprotein gp160</fullName>
    </recommendedName>
    <alternativeName>
        <fullName>Env polyprotein</fullName>
    </alternativeName>
    <component>
        <recommendedName>
            <fullName>Surface protein gp120</fullName>
            <shortName>SU</shortName>
        </recommendedName>
        <alternativeName>
            <fullName>Glycoprotein 120</fullName>
            <shortName>gp120</shortName>
        </alternativeName>
    </component>
    <component>
        <recommendedName>
            <fullName>Transmembrane protein gp41</fullName>
            <shortName>TM</shortName>
        </recommendedName>
        <alternativeName>
            <fullName>Glycoprotein 41</fullName>
            <shortName>gp41</shortName>
        </alternativeName>
    </component>
</protein>
<sequence length="857" mass="98643">MAHTSNHLFILLLLISVYGFLGHKKNYVTVFYGIPAWRNATVPLFCATTNRDTWGTVQCLPDNGDYTEISVNITEAFDAWNNTVTEQAVDDVWSLFETSIKPCVKLTPLCVAMRCNNTGTNTTTKPITTPITTTKPSENLLNDTSPCIKNDTCPGIGLENTVDCYFNMTGLRRDEKKQYKDTWYEKDLECNGNSTSTICYMRTCNTSVIQESCDKHYWDSLRFRYCAPPGYALLRCNDTNYSGFMPKCSKVVVSSCTRMMETQTSTWFGFNGTRTENRTYMYWHSKDNRTIISLNKYYNLTMHCRRPGNKTVIPITIMSGLNFHSQPLNTRPRQAWCWFKGNWIEAIREVKETIIKHPRYKGTNNTERIRLVGPSAGSDPEVRHMWTNCRGEFFYCNMTWFLNWVENRTGTTQKNYVTCHIKQIVNTWHKVGKYVYLPPREGTLSCNSSVTSLIANIDVYYDGNDTKTNITMSAEVGELYRLELGDYKLVEITPIGFAPTEIKRYSSTTPRNKRGVMVLGFLGLLAMAGSAMGATSLTLSAQSRTLLAGIVQQQQQLLDVVKRQQELLRLTVWGTKNLQTRVTAIEKYLKDQALLNSWGCAFRQVCHTTVPWPNETLTPDWENMTWQQWEKRVNFLDANITALLEEAQIQQERNMYELQKLNSWDVFGNWFDFTSWMAYIRLGLYVVAGLIVLRIVIYIMQMLARLRKGYRPVFSSPPSYTQQIPIRKHRGQPANEETEDEGGNEGAYRSWPWQIEYAHFLIRQLRNLLIWLYNGCRNLLLKTSQILQPALQPLRLSLAYLQYGISWFQEAIQAATRAARETLANTGRALWKALRRTAEAIIAIPRRIRQGLELALL</sequence>
<reference key="1">
    <citation type="journal article" date="1993" name="J. Virol.">
        <title>Distinguishing features of an infectious molecular clone of the highly divergent and noncytopathic human immunodeficiency virus type 2 UC1 strain.</title>
        <authorList>
            <person name="Barnett S.W."/>
            <person name="Quiroga M."/>
            <person name="Werner A."/>
            <person name="Dina D."/>
            <person name="Levy J.A."/>
        </authorList>
    </citation>
    <scope>NUCLEOTIDE SEQUENCE [GENOMIC RNA]</scope>
</reference>
<reference key="2">
    <citation type="journal article" date="2002" name="J. Gen. Virol.">
        <title>Human immunodeficiency virus type 2.</title>
        <authorList>
            <person name="Reeves J.D."/>
            <person name="Doms R.W."/>
        </authorList>
    </citation>
    <scope>REVIEW</scope>
</reference>
<organism>
    <name type="scientific">Human immunodeficiency virus type 2 subtype B (isolate UC1)</name>
    <name type="common">HIV-2</name>
    <dbReference type="NCBI Taxonomy" id="388822"/>
    <lineage>
        <taxon>Viruses</taxon>
        <taxon>Riboviria</taxon>
        <taxon>Pararnavirae</taxon>
        <taxon>Artverviricota</taxon>
        <taxon>Revtraviricetes</taxon>
        <taxon>Ortervirales</taxon>
        <taxon>Retroviridae</taxon>
        <taxon>Orthoretrovirinae</taxon>
        <taxon>Lentivirus</taxon>
        <taxon>Human immunodeficiency virus 2</taxon>
    </lineage>
</organism>
<dbReference type="EMBL" id="L07625">
    <property type="protein sequence ID" value="AAA43946.1"/>
    <property type="molecule type" value="Genomic_RNA"/>
</dbReference>
<dbReference type="PIR" id="A45713">
    <property type="entry name" value="A45713"/>
</dbReference>
<dbReference type="SMR" id="Q76638"/>
<dbReference type="GlyCosmos" id="Q76638">
    <property type="glycosylation" value="26 sites, No reported glycans"/>
</dbReference>
<dbReference type="Proteomes" id="UP000007428">
    <property type="component" value="Segment"/>
</dbReference>
<dbReference type="GO" id="GO:0044175">
    <property type="term" value="C:host cell endosome membrane"/>
    <property type="evidence" value="ECO:0007669"/>
    <property type="project" value="UniProtKB-SubCell"/>
</dbReference>
<dbReference type="GO" id="GO:0020002">
    <property type="term" value="C:host cell plasma membrane"/>
    <property type="evidence" value="ECO:0007669"/>
    <property type="project" value="UniProtKB-SubCell"/>
</dbReference>
<dbReference type="GO" id="GO:0016020">
    <property type="term" value="C:membrane"/>
    <property type="evidence" value="ECO:0007669"/>
    <property type="project" value="UniProtKB-KW"/>
</dbReference>
<dbReference type="GO" id="GO:0019031">
    <property type="term" value="C:viral envelope"/>
    <property type="evidence" value="ECO:0007669"/>
    <property type="project" value="UniProtKB-KW"/>
</dbReference>
<dbReference type="GO" id="GO:0055036">
    <property type="term" value="C:virion membrane"/>
    <property type="evidence" value="ECO:0007669"/>
    <property type="project" value="UniProtKB-SubCell"/>
</dbReference>
<dbReference type="GO" id="GO:0005198">
    <property type="term" value="F:structural molecule activity"/>
    <property type="evidence" value="ECO:0007669"/>
    <property type="project" value="InterPro"/>
</dbReference>
<dbReference type="GO" id="GO:0075512">
    <property type="term" value="P:clathrin-dependent endocytosis of virus by host cell"/>
    <property type="evidence" value="ECO:0007669"/>
    <property type="project" value="UniProtKB-KW"/>
</dbReference>
<dbReference type="GO" id="GO:0039654">
    <property type="term" value="P:fusion of virus membrane with host endosome membrane"/>
    <property type="evidence" value="ECO:0007669"/>
    <property type="project" value="UniProtKB-KW"/>
</dbReference>
<dbReference type="GO" id="GO:0052170">
    <property type="term" value="P:symbiont-mediated suppression of host innate immune response"/>
    <property type="evidence" value="ECO:0007669"/>
    <property type="project" value="UniProtKB-KW"/>
</dbReference>
<dbReference type="GO" id="GO:0039587">
    <property type="term" value="P:symbiont-mediated-mediated suppression of host tetherin activity"/>
    <property type="evidence" value="ECO:0007669"/>
    <property type="project" value="UniProtKB-KW"/>
</dbReference>
<dbReference type="GO" id="GO:0019062">
    <property type="term" value="P:virion attachment to host cell"/>
    <property type="evidence" value="ECO:0007669"/>
    <property type="project" value="UniProtKB-KW"/>
</dbReference>
<dbReference type="CDD" id="cd09909">
    <property type="entry name" value="HIV-1-like_HR1-HR2"/>
    <property type="match status" value="1"/>
</dbReference>
<dbReference type="Gene3D" id="1.10.287.210">
    <property type="match status" value="1"/>
</dbReference>
<dbReference type="Gene3D" id="2.170.40.20">
    <property type="entry name" value="Human immunodeficiency virus 1, Gp160, envelope glycoprotein"/>
    <property type="match status" value="2"/>
</dbReference>
<dbReference type="InterPro" id="IPR036377">
    <property type="entry name" value="Gp120_core_sf"/>
</dbReference>
<dbReference type="InterPro" id="IPR000328">
    <property type="entry name" value="GP41-like"/>
</dbReference>
<dbReference type="InterPro" id="IPR000777">
    <property type="entry name" value="HIV1_Gp120"/>
</dbReference>
<dbReference type="Pfam" id="PF00516">
    <property type="entry name" value="GP120"/>
    <property type="match status" value="1"/>
</dbReference>
<dbReference type="Pfam" id="PF00517">
    <property type="entry name" value="GP41"/>
    <property type="match status" value="1"/>
</dbReference>
<dbReference type="SUPFAM" id="SSF56502">
    <property type="entry name" value="gp120 core"/>
    <property type="match status" value="1"/>
</dbReference>
<dbReference type="SUPFAM" id="SSF58069">
    <property type="entry name" value="Virus ectodomain"/>
    <property type="match status" value="1"/>
</dbReference>
<comment type="function">
    <text evidence="1">The surface protein gp120 (SU) attaches the virus to the host lymphoid cell by binding to the primary receptor CD4. This interaction induces a structural rearrangement creating a high affinity binding site for a chemokine coreceptor like CXCR4 and/or CCR5. This peculiar 2 stage receptor-interaction strategy allows gp120 to maintain the highly conserved coreceptor-binding site in a cryptic conformation, protected from neutralizing antibodies. Since CD4 also displays a binding site for the disulfide-isomerase P4HB/PDI, a P4HB/PDI-CD4-CXCR4-gp120 complex may form. In that complex, P4HB/PDI could reach and reduce gp120 disulfide bonds, causing major conformational changes in gp120. TXN, another PDI family member could also be involved in disulfide rearrangements in Env during fusion. These changes are transmitted to the transmembrane protein gp41 and are thought to activate its fusogenic potential by unmasking its fusion peptide (By similarity).</text>
</comment>
<comment type="function">
    <text evidence="1">The surface protein gp120 is a ligand for CD209/DC-SIGN and CLEC4M/DC-SIGNR, which are respectively found on dendritic cells (DCs), and on endothelial cells of liver sinusoids and lymph node sinuses. These interactions allow capture of viral particles at mucosal surfaces by these cells and subsequent transmission to permissive cells. DCs are professional antigen presenting cells, critical for host immunity by inducing specific immune responses against a broad variety of pathogens. They act as sentinels in various tissues where they take up antigen, process it, and present it to T-cells following migration to lymphoid organs. HIV subverts the migration properties of dendritic cells to gain access to CD4+ T-cells in lymph nodes. Virus transmission to permissive T-cells occurs either in trans (without DCs infection, through viral capture and transmission), or in cis (following DCs productive infection, through the usual CD4-gp120 interaction), thereby inducing a robust infection. In trans infection, bound virions remain infectious over days and it is proposed that they are not degraded, but protected in non-lysosomal acidic organelles within the DCs close to the cell membrane thus contributing to the viral infectious potential during DCs' migration from the periphery to the lymphoid tissues. On arrival at lymphoid tissues, intact virions recycle back to DCs' cell surface allowing virus transmission to CD4+ T-cells. Virion capture also seems to lead to MHC-II-restricted viral antigen presentation, and probably to the activation of HIV-specific CD4+ cells (By similarity).</text>
</comment>
<comment type="function">
    <text evidence="1">The transmembrane protein gp41 (TM) acts as a class I viral fusion protein. Under the current model, the protein has at least 3 conformational states: pre-fusion native state, pre-hairpin intermediate state, and post-fusion hairpin state. During fusion of viral and target intracellular membranes, the coiled coil regions (heptad repeats) assume a trimer-of-hairpins structure, positioning the fusion peptide in close proximity to the C-terminal region of the ectodomain. The formation of this structure appears to drive apposition and subsequent fusion of viral and target cell membranes. Complete fusion occurs in host cell endosomes and is dynamin-dependent, however some lipid transfer might occur at the plasma membrane. The virus undergoes clathrin-dependent internalization long before endosomal fusion, thus minimizing the surface exposure of conserved viral epitopes during fusion and reducing the efficacy of inhibitors targeting these epitopes. Membranes fusion leads to delivery of the nucleocapsid into the cytoplasm (By similarity).</text>
</comment>
<comment type="function">
    <text evidence="1">The envelope glycoprotein gp160 precursor down-modulates cell surface CD4 antigen by interacting with it in the endoplasmic reticulum and blocking its transport to the cell surface.</text>
</comment>
<comment type="function">
    <text evidence="1">The gp120-gp41 heterodimer seems to contribute to T-cell depletion during HIV-1 infection. The envelope glycoproteins expressed on the surface of infected cells induce apoptosis through an interaction with uninfected cells expressing the receptor (CD4) and the coreceptors CXCR4 or CCR5. This type of bystander killing may be obtained by at least three distinct mechanisms. First, the interaction between the 2 cells can induce cellular fusion followed by nuclear fusion within the syncytium. Syncytia are condemned to die from apoptosis. Second, the 2 interacting cells may not fuse entirely and simply exchange plasma membrane lipids, after a sort of hemifusion process, followed by rapid death. Third, it is possible that virus-infected cells, on the point of undergoing apoptosis, fuse with CD4-expressing cells, in which case apoptosis is rapidly transmitted from one cell to the other and thus occurs in a sort of contagious fashion (By similarity).</text>
</comment>
<comment type="function">
    <text evidence="1">The gp120-gp41 heterodimer allows rapid transcytosis of the virus through CD4 negative cells such as simple epithelial monolayers of the intestinal, rectal and endocervical epithelial barriers. Both gp120 and gp41 specifically recognize glycosphingolipids galactosyl-ceramide (GalCer) or 3' sulfo-galactosyl-ceramide (GalS) present in the lipid rafts structures of epithelial cells. Binding to these alternative receptors allows the rapid transcytosis of the virus through the epithelial cells. This transcytotic vesicle-mediated transport of virions from the apical side to the basolateral side of the epithelial cells does not involve infection of the cells themselves (By similarity).</text>
</comment>
<comment type="subunit">
    <molecule>Surface protein gp120</molecule>
    <text evidence="1">The mature envelope protein (Env) consists of a homotrimer of non-covalently associated gp120-gp41 heterodimers. The resulting complex protrudes from the virus surface as a spike. There seems to be as few as 10 spikes on the average virion. Interacts with human CD4, CCR5 and CXCR4, to form a P4HB/PDI-CD4-CXCR4-gp120 complex. Gp120 also interacts with the C-type lectins CD209/DC-SIGN and CLEC4M/DC-SIGNR (collectively referred to as DC-SIGN(R)). Gp120 and gp41 interact with GalCer (By similarity).</text>
</comment>
<comment type="subunit">
    <molecule>Transmembrane protein gp41</molecule>
    <text evidence="1">The mature envelope protein (Env) consists of a homotrimer of non-covalently associated gp120-gp41 heterodimers. The resulting complex protrudes from the virus surface as a spike. There seems to be as few as 10 spikes on the average virion.</text>
</comment>
<comment type="subcellular location">
    <molecule>Transmembrane protein gp41</molecule>
    <subcellularLocation>
        <location evidence="1">Virion membrane</location>
        <topology evidence="1">Single-pass type I membrane protein</topology>
    </subcellularLocation>
    <subcellularLocation>
        <location evidence="1">Host cell membrane</location>
        <topology evidence="1">Single-pass type I membrane protein</topology>
    </subcellularLocation>
    <subcellularLocation>
        <location evidence="3">Host endosome membrane</location>
        <topology evidence="3">Single-pass type I membrane protein</topology>
    </subcellularLocation>
    <text evidence="1">It is probably concentrated at the site of budding and incorporated into the virions possibly by contacts between the cytoplasmic tail of Env and the N-terminus of Gag.</text>
</comment>
<comment type="subcellular location">
    <molecule>Surface protein gp120</molecule>
    <subcellularLocation>
        <location evidence="1">Virion membrane</location>
        <topology evidence="1">Peripheral membrane protein</topology>
    </subcellularLocation>
    <subcellularLocation>
        <location evidence="1">Host cell membrane</location>
        <topology evidence="1">Peripheral membrane protein</topology>
    </subcellularLocation>
    <subcellularLocation>
        <location evidence="3">Host endosome membrane</location>
        <topology evidence="3">Peripheral membrane protein</topology>
    </subcellularLocation>
    <text evidence="1">The surface protein is not anchored to the viral envelope, but associates with the extravirion surface through its binding to TM. It is probably concentrated at the site of budding and incorporated into the virions possibly by contacts between the cytoplasmic tail of Env and the N-terminus of Gag (By similarity).</text>
</comment>
<comment type="domain">
    <text evidence="1">Some of the most genetically diverse regions of the viral genome are present in Env. They are called variable regions 1 through 5 (V1 through V5). Coreceptor usage of gp120 is determined mainly by the primary structure of the third variable region (V3) in the outer domain of gp120. Binding to CCR5 involves a region adjacent in addition to V3 (By similarity).</text>
</comment>
<comment type="domain">
    <text evidence="1">The 17 amino acids long immunosuppressive region is present in many retroviral envelope proteins. Synthetic peptides derived from this relatively conserved sequence inhibit immune function in vitro and in vivo (By similarity).</text>
</comment>
<comment type="PTM">
    <text evidence="1">Specific enzymatic cleavages in vivo yield mature proteins. Envelope glycoproteins are synthesized as an inactive precursor that is heavily N-glycosylated and processed likely by host cell furin in the Golgi to yield the mature SU and TM proteins. The cleavage site between SU and TM requires the minimal sequence [KR]-X-[KR]-R (By similarity).</text>
</comment>
<comment type="PTM">
    <text evidence="1">Palmitoylation of the transmembrane protein and of Env polyprotein (prior to its proteolytic cleavage) is essential for their association with host cell membrane lipid rafts. Palmitoylation is therefore required for envelope trafficking to classical lipid rafts, but not for viral replication (By similarity).</text>
</comment>
<comment type="miscellaneous">
    <text>Some HIV-2 isolates have been described that can infect cells independently of CD4, using CXCR4 as primary receptor. These isolates may have an exposed coreceptor binding site.</text>
</comment>
<feature type="signal peptide" evidence="2">
    <location>
        <begin position="1"/>
        <end position="26"/>
    </location>
</feature>
<feature type="chain" id="PRO_0000244705" description="Envelope glycoprotein gp160" evidence="1">
    <location>
        <begin position="27"/>
        <end position="857"/>
    </location>
</feature>
<feature type="chain" id="PRO_0000244706" description="Surface protein gp120" evidence="1">
    <location>
        <begin position="27"/>
        <end position="514"/>
    </location>
</feature>
<feature type="chain" id="PRO_0000244707" description="Transmembrane protein gp41" evidence="1">
    <location>
        <begin position="515"/>
        <end position="857"/>
    </location>
</feature>
<feature type="topological domain" description="Extracellular" evidence="2">
    <location>
        <begin position="27"/>
        <end position="682"/>
    </location>
</feature>
<feature type="transmembrane region" description="Helical" evidence="2">
    <location>
        <begin position="683"/>
        <end position="703"/>
    </location>
</feature>
<feature type="topological domain" description="Cytoplasmic" evidence="2">
    <location>
        <begin position="704"/>
        <end position="857"/>
    </location>
</feature>
<feature type="region of interest" description="V1">
    <location>
        <begin position="115"/>
        <end position="163"/>
    </location>
</feature>
<feature type="region of interest" description="V2">
    <location>
        <begin position="164"/>
        <end position="204"/>
    </location>
</feature>
<feature type="region of interest" description="V3">
    <location>
        <begin position="304"/>
        <end position="336"/>
    </location>
</feature>
<feature type="region of interest" description="V4">
    <location>
        <begin position="396"/>
        <end position="419"/>
    </location>
</feature>
<feature type="region of interest" description="V5">
    <location>
        <begin position="464"/>
        <end position="472"/>
    </location>
</feature>
<feature type="region of interest" description="Fusion peptide" evidence="2">
    <location>
        <begin position="515"/>
        <end position="535"/>
    </location>
</feature>
<feature type="region of interest" description="Immunosuppression" evidence="1">
    <location>
        <begin position="578"/>
        <end position="594"/>
    </location>
</feature>
<feature type="region of interest" description="MPER; binding to GalCer" evidence="1">
    <location>
        <begin position="660"/>
        <end position="681"/>
    </location>
</feature>
<feature type="coiled-coil region" evidence="2">
    <location>
        <begin position="627"/>
        <end position="648"/>
    </location>
</feature>
<feature type="short sequence motif" description="YXXV motif; contains endocytosis signal" evidence="1">
    <location>
        <begin position="710"/>
        <end position="713"/>
    </location>
</feature>
<feature type="short sequence motif" description="Di-leucine internalization motif" evidence="1">
    <location>
        <begin position="856"/>
        <end position="857"/>
    </location>
</feature>
<feature type="site" description="Cleavage; by host furin" evidence="1">
    <location>
        <begin position="514"/>
        <end position="515"/>
    </location>
</feature>
<feature type="lipid moiety-binding region" description="S-palmitoyl cysteine; by host" evidence="1">
    <location>
        <position position="776"/>
    </location>
</feature>
<feature type="glycosylation site" description="N-linked (GlcNAc...) asparagine; by host" evidence="2">
    <location>
        <position position="39"/>
    </location>
</feature>
<feature type="glycosylation site" description="N-linked (GlcNAc...) asparagine; by host" evidence="2">
    <location>
        <position position="72"/>
    </location>
</feature>
<feature type="glycosylation site" description="N-linked (GlcNAc...) asparagine; by host" evidence="2">
    <location>
        <position position="81"/>
    </location>
</feature>
<feature type="glycosylation site" description="N-linked (GlcNAc...) asparagine; by host" evidence="2">
    <location>
        <position position="116"/>
    </location>
</feature>
<feature type="glycosylation site" description="N-linked (GlcNAc...) asparagine; by host" evidence="2">
    <location>
        <position position="121"/>
    </location>
</feature>
<feature type="glycosylation site" description="N-linked (GlcNAc...) asparagine; by host" evidence="2">
    <location>
        <position position="142"/>
    </location>
</feature>
<feature type="glycosylation site" description="N-linked (GlcNAc...) asparagine; by host" evidence="2">
    <location>
        <position position="150"/>
    </location>
</feature>
<feature type="glycosylation site" description="N-linked (GlcNAc...) asparagine; by host" evidence="2">
    <location>
        <position position="167"/>
    </location>
</feature>
<feature type="glycosylation site" description="N-linked (GlcNAc...) asparagine; by host" evidence="2">
    <location>
        <position position="193"/>
    </location>
</feature>
<feature type="glycosylation site" description="N-linked (GlcNAc...) asparagine; by host" evidence="2">
    <location>
        <position position="205"/>
    </location>
</feature>
<feature type="glycosylation site" description="N-linked (GlcNAc...) asparagine; by host" evidence="2">
    <location>
        <position position="237"/>
    </location>
</feature>
<feature type="glycosylation site" description="N-linked (GlcNAc...) asparagine; by host" evidence="2">
    <location>
        <position position="240"/>
    </location>
</feature>
<feature type="glycosylation site" description="N-linked (GlcNAc...) asparagine; by host" evidence="2">
    <location>
        <position position="271"/>
    </location>
</feature>
<feature type="glycosylation site" description="N-linked (GlcNAc...) asparagine; by host" evidence="2">
    <location>
        <position position="277"/>
    </location>
</feature>
<feature type="glycosylation site" description="N-linked (GlcNAc...) asparagine; by host" evidence="2">
    <location>
        <position position="288"/>
    </location>
</feature>
<feature type="glycosylation site" description="N-linked (GlcNAc...) asparagine; by host" evidence="2">
    <location>
        <position position="299"/>
    </location>
</feature>
<feature type="glycosylation site" description="N-linked (GlcNAc...) asparagine; by host" evidence="2">
    <location>
        <position position="309"/>
    </location>
</feature>
<feature type="glycosylation site" description="N-linked (GlcNAc...) asparagine; by host" evidence="2">
    <location>
        <position position="364"/>
    </location>
</feature>
<feature type="glycosylation site" description="N-linked (GlcNAc...) asparagine; by host" evidence="2">
    <location>
        <position position="397"/>
    </location>
</feature>
<feature type="glycosylation site" description="N-linked (GlcNAc...) asparagine; by host" evidence="2">
    <location>
        <position position="407"/>
    </location>
</feature>
<feature type="glycosylation site" description="N-linked (GlcNAc...) asparagine; by host" evidence="2">
    <location>
        <position position="447"/>
    </location>
</feature>
<feature type="glycosylation site" description="N-linked (GlcNAc...) asparagine; by host" evidence="2">
    <location>
        <position position="464"/>
    </location>
</feature>
<feature type="glycosylation site" description="N-linked (GlcNAc...) asparagine; by host" evidence="2">
    <location>
        <position position="469"/>
    </location>
</feature>
<feature type="glycosylation site" description="N-linked (GlcNAc...) asparagine; by host" evidence="2">
    <location>
        <position position="614"/>
    </location>
</feature>
<feature type="glycosylation site" description="N-linked (GlcNAc...) asparagine; by host" evidence="2">
    <location>
        <position position="623"/>
    </location>
</feature>
<feature type="glycosylation site" description="N-linked (GlcNAc...) asparagine; by host" evidence="2">
    <location>
        <position position="639"/>
    </location>
</feature>
<feature type="disulfide bond" evidence="1">
    <location>
        <begin position="46"/>
        <end position="59"/>
    </location>
</feature>
<feature type="disulfide bond" evidence="1">
    <location>
        <begin position="103"/>
        <end position="213"/>
    </location>
</feature>
<feature type="disulfide bond" evidence="1">
    <location>
        <begin position="110"/>
        <end position="204"/>
    </location>
</feature>
<feature type="disulfide bond" evidence="1">
    <location>
        <begin position="115"/>
        <end position="164"/>
    </location>
</feature>
<feature type="disulfide bond" evidence="1">
    <location>
        <begin position="226"/>
        <end position="256"/>
    </location>
</feature>
<feature type="disulfide bond" evidence="1">
    <location>
        <begin position="236"/>
        <end position="248"/>
    </location>
</feature>
<feature type="disulfide bond" evidence="1">
    <location>
        <begin position="304"/>
        <end position="337"/>
    </location>
</feature>
<feature type="disulfide bond" evidence="1">
    <location>
        <begin position="389"/>
        <end position="446"/>
    </location>
</feature>
<feature type="disulfide bond" evidence="1">
    <location>
        <begin position="396"/>
        <end position="419"/>
    </location>
</feature>
<proteinExistence type="inferred from homology"/>
<accession>Q76638</accession>
<gene>
    <name type="primary">env</name>
</gene>
<keyword id="KW-0014">AIDS</keyword>
<keyword id="KW-0053">Apoptosis</keyword>
<keyword id="KW-1165">Clathrin-mediated endocytosis of virus by host</keyword>
<keyword id="KW-0165">Cleavage on pair of basic residues</keyword>
<keyword id="KW-0175">Coiled coil</keyword>
<keyword id="KW-1015">Disulfide bond</keyword>
<keyword id="KW-1170">Fusion of virus membrane with host endosomal membrane</keyword>
<keyword id="KW-1168">Fusion of virus membrane with host membrane</keyword>
<keyword id="KW-0325">Glycoprotein</keyword>
<keyword id="KW-1032">Host cell membrane</keyword>
<keyword id="KW-1039">Host endosome</keyword>
<keyword id="KW-1043">Host membrane</keyword>
<keyword id="KW-0945">Host-virus interaction</keyword>
<keyword id="KW-1090">Inhibition of host innate immune response by virus</keyword>
<keyword id="KW-1084">Inhibition of host tetherin by virus</keyword>
<keyword id="KW-0449">Lipoprotein</keyword>
<keyword id="KW-0472">Membrane</keyword>
<keyword id="KW-0564">Palmitate</keyword>
<keyword id="KW-0732">Signal</keyword>
<keyword id="KW-0812">Transmembrane</keyword>
<keyword id="KW-1133">Transmembrane helix</keyword>
<keyword id="KW-1161">Viral attachment to host cell</keyword>
<keyword id="KW-0261">Viral envelope protein</keyword>
<keyword id="KW-0899">Viral immunoevasion</keyword>
<keyword id="KW-1162">Viral penetration into host cytoplasm</keyword>
<keyword id="KW-0946">Virion</keyword>
<keyword id="KW-1164">Virus endocytosis by host</keyword>
<keyword id="KW-1160">Virus entry into host cell</keyword>